<reference key="1">
    <citation type="journal article" date="1999" name="DNA Res.">
        <title>Complete genome sequence of an aerobic hyper-thermophilic crenarchaeon, Aeropyrum pernix K1.</title>
        <authorList>
            <person name="Kawarabayasi Y."/>
            <person name="Hino Y."/>
            <person name="Horikawa H."/>
            <person name="Yamazaki S."/>
            <person name="Haikawa Y."/>
            <person name="Jin-no K."/>
            <person name="Takahashi M."/>
            <person name="Sekine M."/>
            <person name="Baba S."/>
            <person name="Ankai A."/>
            <person name="Kosugi H."/>
            <person name="Hosoyama A."/>
            <person name="Fukui S."/>
            <person name="Nagai Y."/>
            <person name="Nishijima K."/>
            <person name="Nakazawa H."/>
            <person name="Takamiya M."/>
            <person name="Masuda S."/>
            <person name="Funahashi T."/>
            <person name="Tanaka T."/>
            <person name="Kudoh Y."/>
            <person name="Yamazaki J."/>
            <person name="Kushida N."/>
            <person name="Oguchi A."/>
            <person name="Aoki K."/>
            <person name="Kubota K."/>
            <person name="Nakamura Y."/>
            <person name="Nomura N."/>
            <person name="Sako Y."/>
            <person name="Kikuchi H."/>
        </authorList>
    </citation>
    <scope>NUCLEOTIDE SEQUENCE [LARGE SCALE GENOMIC DNA]</scope>
    <source>
        <strain>ATCC 700893 / DSM 11879 / JCM 9820 / NBRC 100138 / K1</strain>
    </source>
</reference>
<proteinExistence type="inferred from homology"/>
<feature type="chain" id="PRO_0000137390" description="Translation initiation factor 2 subunit alpha">
    <location>
        <begin position="1"/>
        <end position="277"/>
    </location>
</feature>
<feature type="domain" description="S1 motif">
    <location>
        <begin position="22"/>
        <end position="93"/>
    </location>
</feature>
<accession>Q9YF02</accession>
<keyword id="KW-0396">Initiation factor</keyword>
<keyword id="KW-0648">Protein biosynthesis</keyword>
<keyword id="KW-1185">Reference proteome</keyword>
<keyword id="KW-0694">RNA-binding</keyword>
<sequence length="277" mass="31479">MSEEGGVEVKLLKPRKPLPDVGEIVVGTVQEVHDYGAYLILDEYGGVRAFLPWSEIASRAVRNIHAVLKPRQKVVVKVIRVYKKRGQVDVSLKRVMDSEKKRKMMFYKRYLKAATLVELIAEKLGKSVDEAYREVLWKLEDAYGDPMKGLEAAVLQGREALEKAGVPEEWIEPLLETAKTHVRVKTVKITFYLTLRSMAGDGVERVRKVLEAAKSQIESFKDSKVVARIYTVGAPKYRVELQGYNYKTLEKALEKMVEAARKTASKLGVEFSFERED</sequence>
<evidence type="ECO:0000250" key="1"/>
<evidence type="ECO:0000305" key="2"/>
<gene>
    <name type="primary">eif2a</name>
    <name type="ordered locus">APE_0436.1</name>
</gene>
<protein>
    <recommendedName>
        <fullName>Translation initiation factor 2 subunit alpha</fullName>
    </recommendedName>
    <alternativeName>
        <fullName>aIF2-alpha</fullName>
    </alternativeName>
    <alternativeName>
        <fullName>eIF-2-alpha</fullName>
    </alternativeName>
</protein>
<name>IF2A_AERPE</name>
<organism>
    <name type="scientific">Aeropyrum pernix (strain ATCC 700893 / DSM 11879 / JCM 9820 / NBRC 100138 / K1)</name>
    <dbReference type="NCBI Taxonomy" id="272557"/>
    <lineage>
        <taxon>Archaea</taxon>
        <taxon>Thermoproteota</taxon>
        <taxon>Thermoprotei</taxon>
        <taxon>Desulfurococcales</taxon>
        <taxon>Desulfurococcaceae</taxon>
        <taxon>Aeropyrum</taxon>
    </lineage>
</organism>
<dbReference type="EMBL" id="BA000002">
    <property type="protein sequence ID" value="BAA79394.2"/>
    <property type="molecule type" value="Genomic_DNA"/>
</dbReference>
<dbReference type="PIR" id="F72737">
    <property type="entry name" value="F72737"/>
</dbReference>
<dbReference type="RefSeq" id="WP_010865740.1">
    <property type="nucleotide sequence ID" value="NC_000854.2"/>
</dbReference>
<dbReference type="SMR" id="Q9YF02"/>
<dbReference type="STRING" id="272557.APE_0436.1"/>
<dbReference type="EnsemblBacteria" id="BAA79394">
    <property type="protein sequence ID" value="BAA79394"/>
    <property type="gene ID" value="APE_0436.1"/>
</dbReference>
<dbReference type="GeneID" id="1444622"/>
<dbReference type="KEGG" id="ape:APE_0436.1"/>
<dbReference type="PATRIC" id="fig|272557.25.peg.325"/>
<dbReference type="eggNOG" id="arCOG04107">
    <property type="taxonomic scope" value="Archaea"/>
</dbReference>
<dbReference type="Proteomes" id="UP000002518">
    <property type="component" value="Chromosome"/>
</dbReference>
<dbReference type="GO" id="GO:0043022">
    <property type="term" value="F:ribosome binding"/>
    <property type="evidence" value="ECO:0007669"/>
    <property type="project" value="TreeGrafter"/>
</dbReference>
<dbReference type="GO" id="GO:0003723">
    <property type="term" value="F:RNA binding"/>
    <property type="evidence" value="ECO:0007669"/>
    <property type="project" value="UniProtKB-UniRule"/>
</dbReference>
<dbReference type="GO" id="GO:0003743">
    <property type="term" value="F:translation initiation factor activity"/>
    <property type="evidence" value="ECO:0007669"/>
    <property type="project" value="UniProtKB-UniRule"/>
</dbReference>
<dbReference type="CDD" id="cd04452">
    <property type="entry name" value="S1_IF2_alpha"/>
    <property type="match status" value="1"/>
</dbReference>
<dbReference type="Gene3D" id="3.30.70.1130">
    <property type="entry name" value="EIF_2_alpha"/>
    <property type="match status" value="1"/>
</dbReference>
<dbReference type="Gene3D" id="2.40.50.140">
    <property type="entry name" value="Nucleic acid-binding proteins"/>
    <property type="match status" value="1"/>
</dbReference>
<dbReference type="Gene3D" id="1.10.150.190">
    <property type="entry name" value="Translation initiation factor 2, subunit 1, domain 2"/>
    <property type="match status" value="1"/>
</dbReference>
<dbReference type="HAMAP" id="MF_00231">
    <property type="entry name" value="eIF_2_alpha"/>
    <property type="match status" value="1"/>
</dbReference>
<dbReference type="InterPro" id="IPR012340">
    <property type="entry name" value="NA-bd_OB-fold"/>
</dbReference>
<dbReference type="InterPro" id="IPR003029">
    <property type="entry name" value="S1_domain"/>
</dbReference>
<dbReference type="InterPro" id="IPR044126">
    <property type="entry name" value="S1_IF2_alpha"/>
</dbReference>
<dbReference type="InterPro" id="IPR022964">
    <property type="entry name" value="TIF2_asu_arc"/>
</dbReference>
<dbReference type="InterPro" id="IPR024055">
    <property type="entry name" value="TIF2_asu_C"/>
</dbReference>
<dbReference type="InterPro" id="IPR024054">
    <property type="entry name" value="TIF2_asu_middle_sf"/>
</dbReference>
<dbReference type="InterPro" id="IPR011488">
    <property type="entry name" value="TIF_2_asu"/>
</dbReference>
<dbReference type="NCBIfam" id="NF003062">
    <property type="entry name" value="PRK03987.1-1"/>
    <property type="match status" value="1"/>
</dbReference>
<dbReference type="PANTHER" id="PTHR10602">
    <property type="entry name" value="EUKARYOTIC TRANSLATION INITIATION FACTOR 2 SUBUNIT 1"/>
    <property type="match status" value="1"/>
</dbReference>
<dbReference type="PANTHER" id="PTHR10602:SF0">
    <property type="entry name" value="EUKARYOTIC TRANSLATION INITIATION FACTOR 2 SUBUNIT 1"/>
    <property type="match status" value="1"/>
</dbReference>
<dbReference type="Pfam" id="PF07541">
    <property type="entry name" value="EIF_2_alpha"/>
    <property type="match status" value="1"/>
</dbReference>
<dbReference type="Pfam" id="PF00575">
    <property type="entry name" value="S1"/>
    <property type="match status" value="1"/>
</dbReference>
<dbReference type="SMART" id="SM00316">
    <property type="entry name" value="S1"/>
    <property type="match status" value="1"/>
</dbReference>
<dbReference type="SUPFAM" id="SSF110993">
    <property type="entry name" value="eIF-2-alpha, C-terminal domain"/>
    <property type="match status" value="1"/>
</dbReference>
<dbReference type="SUPFAM" id="SSF116742">
    <property type="entry name" value="eIF2alpha middle domain-like"/>
    <property type="match status" value="1"/>
</dbReference>
<dbReference type="SUPFAM" id="SSF50249">
    <property type="entry name" value="Nucleic acid-binding proteins"/>
    <property type="match status" value="1"/>
</dbReference>
<dbReference type="PROSITE" id="PS50126">
    <property type="entry name" value="S1"/>
    <property type="match status" value="1"/>
</dbReference>
<comment type="function">
    <text evidence="1">eIF-2 functions in the early steps of protein synthesis by forming a ternary complex with GTP and initiator tRNA.</text>
</comment>
<comment type="subunit">
    <text evidence="1">Heterotrimer composed of an alpha, a beta and a gamma chain.</text>
</comment>
<comment type="similarity">
    <text evidence="2">Belongs to the eIF-2-alpha family.</text>
</comment>